<gene>
    <name evidence="1" type="primary">matK</name>
</gene>
<proteinExistence type="inferred from homology"/>
<feature type="chain" id="PRO_0000143304" description="Maturase K">
    <location>
        <begin position="1"/>
        <end position="499"/>
    </location>
</feature>
<comment type="function">
    <text evidence="1">Usually encoded in the trnK tRNA gene intron. Probably assists in splicing its own and other chloroplast group II introns.</text>
</comment>
<comment type="subcellular location">
    <subcellularLocation>
        <location>Plastid</location>
        <location>Chloroplast</location>
    </subcellularLocation>
</comment>
<comment type="similarity">
    <text evidence="1">Belongs to the intron maturase 2 family. MatK subfamily.</text>
</comment>
<dbReference type="EMBL" id="AJ429305">
    <property type="protein sequence ID" value="CAD22201.1"/>
    <property type="molecule type" value="Genomic_DNA"/>
</dbReference>
<dbReference type="GO" id="GO:0009507">
    <property type="term" value="C:chloroplast"/>
    <property type="evidence" value="ECO:0007669"/>
    <property type="project" value="UniProtKB-SubCell"/>
</dbReference>
<dbReference type="GO" id="GO:0003723">
    <property type="term" value="F:RNA binding"/>
    <property type="evidence" value="ECO:0007669"/>
    <property type="project" value="UniProtKB-KW"/>
</dbReference>
<dbReference type="GO" id="GO:0006397">
    <property type="term" value="P:mRNA processing"/>
    <property type="evidence" value="ECO:0007669"/>
    <property type="project" value="UniProtKB-KW"/>
</dbReference>
<dbReference type="GO" id="GO:0008380">
    <property type="term" value="P:RNA splicing"/>
    <property type="evidence" value="ECO:0007669"/>
    <property type="project" value="UniProtKB-UniRule"/>
</dbReference>
<dbReference type="GO" id="GO:0008033">
    <property type="term" value="P:tRNA processing"/>
    <property type="evidence" value="ECO:0007669"/>
    <property type="project" value="UniProtKB-KW"/>
</dbReference>
<dbReference type="HAMAP" id="MF_01390">
    <property type="entry name" value="MatK"/>
    <property type="match status" value="1"/>
</dbReference>
<dbReference type="InterPro" id="IPR024937">
    <property type="entry name" value="Domain_X"/>
</dbReference>
<dbReference type="InterPro" id="IPR002866">
    <property type="entry name" value="Maturase_MatK"/>
</dbReference>
<dbReference type="InterPro" id="IPR024942">
    <property type="entry name" value="Maturase_MatK_N"/>
</dbReference>
<dbReference type="PANTHER" id="PTHR34811">
    <property type="entry name" value="MATURASE K"/>
    <property type="match status" value="1"/>
</dbReference>
<dbReference type="PANTHER" id="PTHR34811:SF1">
    <property type="entry name" value="MATURASE K"/>
    <property type="match status" value="1"/>
</dbReference>
<dbReference type="Pfam" id="PF01348">
    <property type="entry name" value="Intron_maturas2"/>
    <property type="match status" value="1"/>
</dbReference>
<dbReference type="Pfam" id="PF01824">
    <property type="entry name" value="MatK_N"/>
    <property type="match status" value="1"/>
</dbReference>
<organism>
    <name type="scientific">Camellia sinensis</name>
    <name type="common">Tea plant</name>
    <name type="synonym">Thea sinensis</name>
    <dbReference type="NCBI Taxonomy" id="4442"/>
    <lineage>
        <taxon>Eukaryota</taxon>
        <taxon>Viridiplantae</taxon>
        <taxon>Streptophyta</taxon>
        <taxon>Embryophyta</taxon>
        <taxon>Tracheophyta</taxon>
        <taxon>Spermatophyta</taxon>
        <taxon>Magnoliopsida</taxon>
        <taxon>eudicotyledons</taxon>
        <taxon>Gunneridae</taxon>
        <taxon>Pentapetalae</taxon>
        <taxon>asterids</taxon>
        <taxon>Ericales</taxon>
        <taxon>Theaceae</taxon>
        <taxon>Camellia</taxon>
    </lineage>
</organism>
<reference key="1">
    <citation type="journal article" date="2002" name="Mol. Phylogenet. Evol.">
        <title>Phylogenetics of asterids based on 3 coding and 3 non-coding chloroplast DNA markers and the utility of non-coding DNA at higher taxonomic levels.</title>
        <authorList>
            <person name="Bremer B."/>
            <person name="Bremer K."/>
            <person name="Heidari N."/>
            <person name="Erixon P."/>
            <person name="Olmstead R.G."/>
            <person name="Anderberg A.A."/>
            <person name="Kallersjo M."/>
            <person name="Barkhordarian E."/>
        </authorList>
    </citation>
    <scope>NUCLEOTIDE SEQUENCE [GENOMIC DNA]</scope>
</reference>
<evidence type="ECO:0000255" key="1">
    <source>
        <dbReference type="HAMAP-Rule" id="MF_01390"/>
    </source>
</evidence>
<protein>
    <recommendedName>
        <fullName evidence="1">Maturase K</fullName>
    </recommendedName>
    <alternativeName>
        <fullName evidence="1">Intron maturase</fullName>
    </alternativeName>
</protein>
<sequence>MEEFKRYLELDRSQQHDFVYPLIFQEYIYALAHDHGLTRSIFLENIGYDNKFSLLIVKHLIIQMYQQNHFLFSANDSNQNPFFGHNTNLYSQMILEGFVAVVEIPFSLFSLEGKEIVKSQNLRSIHSIFPFLEDKFSHLNYVLDILIPHSIHLEISVQTLRYWVKDASSLYLLRFFLHMYWNWNSLITPKKSSFYFSKRNQRLFLFLYNFHICEYESIFVFLRKQSSHLRSISSGTFLERRYFYGKIEHFLEVFTKDFQVILWLFKDPFIHYVRYQGKYILASKGTSLLMNKWKSYLVNFWQCYFYMWSQPGRIHINQLSKHSPDFLGYLSSVRLNPSMVRSQMLENSFLIGNAIKRFDTIVPIIPMIGSLSKAKFCNVLGHPISKPVWADLSNSDIIDRFGRIYRNLSHYHSGSSKKTSLYRIKYILRLSCARTLARKHKSTVRAFLKRLGSELLEEFFMGEEQVFSLTFPSSTSQGLYRRRIWYLDIVCINDLASHE</sequence>
<keyword id="KW-0150">Chloroplast</keyword>
<keyword id="KW-0507">mRNA processing</keyword>
<keyword id="KW-0934">Plastid</keyword>
<keyword id="KW-0694">RNA-binding</keyword>
<keyword id="KW-0819">tRNA processing</keyword>
<name>MATK_CAMSI</name>
<accession>Q8MA31</accession>
<geneLocation type="chloroplast"/>